<feature type="chain" id="PRO_0000100813" description="Phosphoribosylaminoimidazole-succinocarboxamide synthase 1">
    <location>
        <begin position="1"/>
        <end position="252"/>
    </location>
</feature>
<accession>Q9A5F9</accession>
<organism>
    <name type="scientific">Caulobacter vibrioides (strain ATCC 19089 / CIP 103742 / CB 15)</name>
    <name type="common">Caulobacter crescentus</name>
    <dbReference type="NCBI Taxonomy" id="190650"/>
    <lineage>
        <taxon>Bacteria</taxon>
        <taxon>Pseudomonadati</taxon>
        <taxon>Pseudomonadota</taxon>
        <taxon>Alphaproteobacteria</taxon>
        <taxon>Caulobacterales</taxon>
        <taxon>Caulobacteraceae</taxon>
        <taxon>Caulobacter</taxon>
    </lineage>
</organism>
<protein>
    <recommendedName>
        <fullName>Phosphoribosylaminoimidazole-succinocarboxamide synthase 1</fullName>
        <ecNumber>6.3.2.6</ecNumber>
    </recommendedName>
    <alternativeName>
        <fullName>SAICAR synthetase 1</fullName>
    </alternativeName>
</protein>
<proteinExistence type="inferred from homology"/>
<name>PUR71_CAUVC</name>
<reference key="1">
    <citation type="journal article" date="2001" name="Proc. Natl. Acad. Sci. U.S.A.">
        <title>Complete genome sequence of Caulobacter crescentus.</title>
        <authorList>
            <person name="Nierman W.C."/>
            <person name="Feldblyum T.V."/>
            <person name="Laub M.T."/>
            <person name="Paulsen I.T."/>
            <person name="Nelson K.E."/>
            <person name="Eisen J.A."/>
            <person name="Heidelberg J.F."/>
            <person name="Alley M.R.K."/>
            <person name="Ohta N."/>
            <person name="Maddock J.R."/>
            <person name="Potocka I."/>
            <person name="Nelson W.C."/>
            <person name="Newton A."/>
            <person name="Stephens C."/>
            <person name="Phadke N.D."/>
            <person name="Ely B."/>
            <person name="DeBoy R.T."/>
            <person name="Dodson R.J."/>
            <person name="Durkin A.S."/>
            <person name="Gwinn M.L."/>
            <person name="Haft D.H."/>
            <person name="Kolonay J.F."/>
            <person name="Smit J."/>
            <person name="Craven M.B."/>
            <person name="Khouri H.M."/>
            <person name="Shetty J."/>
            <person name="Berry K.J."/>
            <person name="Utterback T.R."/>
            <person name="Tran K."/>
            <person name="Wolf A.M."/>
            <person name="Vamathevan J.J."/>
            <person name="Ermolaeva M.D."/>
            <person name="White O."/>
            <person name="Salzberg S.L."/>
            <person name="Venter J.C."/>
            <person name="Shapiro L."/>
            <person name="Fraser C.M."/>
        </authorList>
    </citation>
    <scope>NUCLEOTIDE SEQUENCE [LARGE SCALE GENOMIC DNA]</scope>
    <source>
        <strain>ATCC 19089 / CIP 103742 / CB 15</strain>
    </source>
</reference>
<evidence type="ECO:0000305" key="1"/>
<keyword id="KW-0067">ATP-binding</keyword>
<keyword id="KW-0436">Ligase</keyword>
<keyword id="KW-0547">Nucleotide-binding</keyword>
<keyword id="KW-0658">Purine biosynthesis</keyword>
<keyword id="KW-1185">Reference proteome</keyword>
<gene>
    <name type="primary">purC1</name>
    <name type="synonym">purC</name>
    <name type="ordered locus">CC_2491</name>
</gene>
<sequence>MTTRRKKIYEGKAKILYEGPEPGTLIQYFKDDATAFNAQKKAILEGKGVINNRISEYIMTRLNGIGVQNHFIRRLNLREQLIKEVEIVPLEVVVRNIAAGSIATRLGLTEGQPLPRSIIEFYYKDDKLGDPMVTEEHITAFNWAATQEIDDMMAMALRVNDYLSGLFAGVGITLVDFKVEFGRVYEGDFSRVILADEISPDSCRLWDTVTNEKLDKDRFRRDLGNVIESYTEVARRLGIMKEMPTVIQGGVH</sequence>
<comment type="catalytic activity">
    <reaction>
        <text>5-amino-1-(5-phospho-D-ribosyl)imidazole-4-carboxylate + L-aspartate + ATP = (2S)-2-[5-amino-1-(5-phospho-beta-D-ribosyl)imidazole-4-carboxamido]succinate + ADP + phosphate + 2 H(+)</text>
        <dbReference type="Rhea" id="RHEA:22628"/>
        <dbReference type="ChEBI" id="CHEBI:15378"/>
        <dbReference type="ChEBI" id="CHEBI:29991"/>
        <dbReference type="ChEBI" id="CHEBI:30616"/>
        <dbReference type="ChEBI" id="CHEBI:43474"/>
        <dbReference type="ChEBI" id="CHEBI:58443"/>
        <dbReference type="ChEBI" id="CHEBI:77657"/>
        <dbReference type="ChEBI" id="CHEBI:456216"/>
        <dbReference type="EC" id="6.3.2.6"/>
    </reaction>
</comment>
<comment type="pathway">
    <text>Purine metabolism; IMP biosynthesis via de novo pathway; 5-amino-1-(5-phospho-D-ribosyl)imidazole-4-carboxamide from 5-amino-1-(5-phospho-D-ribosyl)imidazole-4-carboxylate: step 1/2.</text>
</comment>
<comment type="similarity">
    <text evidence="1">Belongs to the SAICAR synthetase family.</text>
</comment>
<dbReference type="EC" id="6.3.2.6"/>
<dbReference type="EMBL" id="AE005673">
    <property type="protein sequence ID" value="AAK24462.1"/>
    <property type="molecule type" value="Genomic_DNA"/>
</dbReference>
<dbReference type="PIR" id="B87558">
    <property type="entry name" value="B87558"/>
</dbReference>
<dbReference type="RefSeq" id="NP_421294.1">
    <property type="nucleotide sequence ID" value="NC_002696.2"/>
</dbReference>
<dbReference type="RefSeq" id="WP_010920349.1">
    <property type="nucleotide sequence ID" value="NC_002696.2"/>
</dbReference>
<dbReference type="SMR" id="Q9A5F9"/>
<dbReference type="STRING" id="190650.CC_2491"/>
<dbReference type="EnsemblBacteria" id="AAK24462">
    <property type="protein sequence ID" value="AAK24462"/>
    <property type="gene ID" value="CC_2491"/>
</dbReference>
<dbReference type="KEGG" id="ccr:CC_2491"/>
<dbReference type="PATRIC" id="fig|190650.5.peg.2509"/>
<dbReference type="eggNOG" id="COG0152">
    <property type="taxonomic scope" value="Bacteria"/>
</dbReference>
<dbReference type="HOGENOM" id="CLU_061495_2_0_5"/>
<dbReference type="BioCyc" id="CAULO:CC2491-MONOMER"/>
<dbReference type="UniPathway" id="UPA00074">
    <property type="reaction ID" value="UER00131"/>
</dbReference>
<dbReference type="Proteomes" id="UP000001816">
    <property type="component" value="Chromosome"/>
</dbReference>
<dbReference type="GO" id="GO:0005829">
    <property type="term" value="C:cytosol"/>
    <property type="evidence" value="ECO:0007669"/>
    <property type="project" value="TreeGrafter"/>
</dbReference>
<dbReference type="GO" id="GO:0005524">
    <property type="term" value="F:ATP binding"/>
    <property type="evidence" value="ECO:0007669"/>
    <property type="project" value="UniProtKB-KW"/>
</dbReference>
<dbReference type="GO" id="GO:0004639">
    <property type="term" value="F:phosphoribosylaminoimidazolesuccinocarboxamide synthase activity"/>
    <property type="evidence" value="ECO:0007669"/>
    <property type="project" value="UniProtKB-UniRule"/>
</dbReference>
<dbReference type="GO" id="GO:0006189">
    <property type="term" value="P:'de novo' IMP biosynthetic process"/>
    <property type="evidence" value="ECO:0007669"/>
    <property type="project" value="UniProtKB-UniRule"/>
</dbReference>
<dbReference type="GO" id="GO:0009236">
    <property type="term" value="P:cobalamin biosynthetic process"/>
    <property type="evidence" value="ECO:0007669"/>
    <property type="project" value="InterPro"/>
</dbReference>
<dbReference type="CDD" id="cd01415">
    <property type="entry name" value="SAICAR_synt_PurC"/>
    <property type="match status" value="1"/>
</dbReference>
<dbReference type="FunFam" id="3.30.470.20:FF:000006">
    <property type="entry name" value="Phosphoribosylaminoimidazole-succinocarboxamide synthase"/>
    <property type="match status" value="1"/>
</dbReference>
<dbReference type="Gene3D" id="3.30.470.20">
    <property type="entry name" value="ATP-grasp fold, B domain"/>
    <property type="match status" value="1"/>
</dbReference>
<dbReference type="Gene3D" id="3.30.200.20">
    <property type="entry name" value="Phosphorylase Kinase, domain 1"/>
    <property type="match status" value="1"/>
</dbReference>
<dbReference type="HAMAP" id="MF_00137">
    <property type="entry name" value="SAICAR_synth"/>
    <property type="match status" value="1"/>
</dbReference>
<dbReference type="InterPro" id="IPR028923">
    <property type="entry name" value="SAICAR_synt/ADE2_N"/>
</dbReference>
<dbReference type="InterPro" id="IPR033934">
    <property type="entry name" value="SAICAR_synt_PurC"/>
</dbReference>
<dbReference type="InterPro" id="IPR001636">
    <property type="entry name" value="SAICAR_synth"/>
</dbReference>
<dbReference type="InterPro" id="IPR050089">
    <property type="entry name" value="SAICAR_synthetase"/>
</dbReference>
<dbReference type="InterPro" id="IPR018236">
    <property type="entry name" value="SAICAR_synthetase_CS"/>
</dbReference>
<dbReference type="NCBIfam" id="TIGR00081">
    <property type="entry name" value="purC"/>
    <property type="match status" value="1"/>
</dbReference>
<dbReference type="PANTHER" id="PTHR43599">
    <property type="entry name" value="MULTIFUNCTIONAL PROTEIN ADE2"/>
    <property type="match status" value="1"/>
</dbReference>
<dbReference type="PANTHER" id="PTHR43599:SF3">
    <property type="entry name" value="SI:DKEY-6E2.2"/>
    <property type="match status" value="1"/>
</dbReference>
<dbReference type="Pfam" id="PF01259">
    <property type="entry name" value="SAICAR_synt"/>
    <property type="match status" value="1"/>
</dbReference>
<dbReference type="SUPFAM" id="SSF56104">
    <property type="entry name" value="SAICAR synthase-like"/>
    <property type="match status" value="1"/>
</dbReference>
<dbReference type="PROSITE" id="PS01057">
    <property type="entry name" value="SAICAR_SYNTHETASE_1"/>
    <property type="match status" value="1"/>
</dbReference>